<dbReference type="EMBL" id="M26915">
    <property type="protein sequence ID" value="AAA49975.1"/>
    <property type="molecule type" value="Genomic_DNA"/>
</dbReference>
<dbReference type="PIR" id="A32494">
    <property type="entry name" value="A32494"/>
</dbReference>
<dbReference type="Proteomes" id="UP000186698">
    <property type="component" value="Unplaced"/>
</dbReference>
<feature type="chain" id="PRO_0000066536" description="Transposon TX1 uncharacterized 82 kDa protein">
    <location>
        <begin position="1"/>
        <end position="775"/>
    </location>
</feature>
<feature type="region of interest" description="Disordered" evidence="1">
    <location>
        <begin position="1"/>
        <end position="46"/>
    </location>
</feature>
<feature type="region of interest" description="Disordered" evidence="1">
    <location>
        <begin position="256"/>
        <end position="277"/>
    </location>
</feature>
<feature type="region of interest" description="Disordered" evidence="1">
    <location>
        <begin position="535"/>
        <end position="565"/>
    </location>
</feature>
<feature type="compositionally biased region" description="Basic and acidic residues" evidence="1">
    <location>
        <begin position="1"/>
        <end position="10"/>
    </location>
</feature>
<feature type="compositionally biased region" description="Polar residues" evidence="1">
    <location>
        <begin position="35"/>
        <end position="46"/>
    </location>
</feature>
<feature type="compositionally biased region" description="Basic and acidic residues" evidence="1">
    <location>
        <begin position="539"/>
        <end position="549"/>
    </location>
</feature>
<organism>
    <name type="scientific">Xenopus laevis</name>
    <name type="common">African clawed frog</name>
    <dbReference type="NCBI Taxonomy" id="8355"/>
    <lineage>
        <taxon>Eukaryota</taxon>
        <taxon>Metazoa</taxon>
        <taxon>Chordata</taxon>
        <taxon>Craniata</taxon>
        <taxon>Vertebrata</taxon>
        <taxon>Euteleostomi</taxon>
        <taxon>Amphibia</taxon>
        <taxon>Batrachia</taxon>
        <taxon>Anura</taxon>
        <taxon>Pipoidea</taxon>
        <taxon>Pipidae</taxon>
        <taxon>Xenopodinae</taxon>
        <taxon>Xenopus</taxon>
        <taxon>Xenopus</taxon>
    </lineage>
</organism>
<accession>P14380</accession>
<protein>
    <recommendedName>
        <fullName>Transposon TX1 uncharacterized 82 kDa protein</fullName>
    </recommendedName>
    <alternativeName>
        <fullName>ORF 1</fullName>
    </alternativeName>
</protein>
<proteinExistence type="predicted"/>
<keyword id="KW-1185">Reference proteome</keyword>
<keyword id="KW-0814">Transposable element</keyword>
<name>YTX1_XENLA</name>
<sequence>MGGNKKESYKKTSLGSKAKGPEKPSCSSARKHQSEPMSKSPIASTSAAAANVTPAKTFAHAVATGSNPGQVTAGVEKLTRKHGVRCLMSSTHGIEAYIKAAAEVVGHSAVVAASKMYGKAIIFARTLTAVHTLVQRGITVGGSYVPVEPLEGLGTRVVLSNVPPFLQDHLLYPHLQALGELKSNMSRIPLGCKESRLRHVLSFKRQVQLLLPRGQDTIEGSFGVPFEGVLYKIFYSTEEVRCFLCKNLGHTRQSCPKGQIKTTAPVPAPSASNKTSYPAGTISAGSSKGISPSLKNLKVAVTQPTSTTSKPPPSSLKTSKAAACLTIAAKEKGGKHVKASPRVTVVPITKKCTPVMGTPEGVGVPMIATSVGVGADSGLSSSDAKKKRKFKSNWLVPEEWASVVNDGAPPSKGKKGSKTSAPHVVTLSGPTVGHDQPVSDHALLPPDQVGNNEVNGLHGLEHGSVGFPTESGVQYLPQNHLEDLPLECKETPNETPAEWAVSVPEVLRFGNCNQPQFLVPQGISLQEGENIGLTPIQDPADKTAGKDGEGGVVDTEEGSQTTSTVHAKISLPLSSTDPNVIAIQKAQEVVERAEANHRASKALPVAGELISSVAPVSNTSKCVSSEVEGTPEPLQGLQKSDSDTFPATTCGEILKALVERGDYQSLSQEELMDEGNIEEEVDIGVANPSTPIIPAEELKKFLESTLGVKLEKKMHMALEKWHDLPLVINSVRQYIKVIKEAKNYGTAEYLRIMKFHKKCLSHQTLMKVKALPKTQ</sequence>
<reference key="1">
    <citation type="journal article" date="1989" name="Mol. Cell. Biol.">
        <title>Composite transposable elements in the Xenopus laevis genome.</title>
        <authorList>
            <person name="Garrett J.E."/>
            <person name="Knutzon D.S."/>
            <person name="Carroll D."/>
        </authorList>
    </citation>
    <scope>NUCLEOTIDE SEQUENCE [GENOMIC DNA]</scope>
</reference>
<evidence type="ECO:0000256" key="1">
    <source>
        <dbReference type="SAM" id="MobiDB-lite"/>
    </source>
</evidence>